<comment type="function">
    <text evidence="8">Catalyzes xyloglucan endotransglycosylation (XET). Cleaves and religates xyloglucan polymers. Does not catalyze xyloglucan endohydrolysis (XEH). Probably involved in cell wall assembly and synthesis in fast growing tissues and in the maintenance of firmness in mature fruits.</text>
</comment>
<comment type="catalytic activity">
    <reaction evidence="7 8">
        <text>breaks a beta-(1-&gt;4) bond in the backbone of a xyloglucan and transfers the xyloglucanyl segment on to O-4 of the non-reducing terminal glucose residue of an acceptor, which can be a xyloglucan or an oligosaccharide of xyloglucan.</text>
        <dbReference type="EC" id="2.4.1.207"/>
    </reaction>
</comment>
<comment type="biophysicochemical properties">
    <phDependence>
        <text evidence="8">Optimum pH is between 5-6. Activity decreases sharply when the pH is lowered from 5 to 4.</text>
    </phDependence>
</comment>
<comment type="subcellular location">
    <subcellularLocation>
        <location evidence="8">Cytoplasm</location>
    </subcellularLocation>
    <text evidence="8">Dispersed throughout the cell.</text>
</comment>
<comment type="tissue specificity">
    <text evidence="8">Expressed at a very high level in flowers and stems (picked at anthesis), and at a lower level in ripe leaves and fruits.</text>
</comment>
<comment type="developmental stage">
    <text evidence="8">Expressed during fruit ripening. Expressed at an extremely high level in fast growing tissues, such as young leaves and fruits.</text>
</comment>
<comment type="induction">
    <text evidence="8">In fruits, up-regulated by gibberellic acid (GA3) or by cold treatment during storage.</text>
</comment>
<comment type="PTM">
    <text evidence="7">Contains at least one intrachain disulfide bond essential for its enzymatic activity.</text>
</comment>
<comment type="similarity">
    <text evidence="10">Belongs to the glycosyl hydrolase 16 family. XTH group 2 subfamily.</text>
</comment>
<dbReference type="EC" id="2.4.1.207" evidence="7 8"/>
<dbReference type="EMBL" id="KC541541">
    <property type="protein sequence ID" value="AGT29357.1"/>
    <property type="molecule type" value="mRNA"/>
</dbReference>
<dbReference type="SMR" id="A0A067XR63"/>
<dbReference type="GlyCosmos" id="A0A067XR63">
    <property type="glycosylation" value="1 site, No reported glycans"/>
</dbReference>
<dbReference type="BRENDA" id="2.4.1.207">
    <property type="organism ID" value="7744"/>
</dbReference>
<dbReference type="BRENDA" id="3.2.1.151">
    <property type="organism ID" value="7744"/>
</dbReference>
<dbReference type="GO" id="GO:0048046">
    <property type="term" value="C:apoplast"/>
    <property type="evidence" value="ECO:0007669"/>
    <property type="project" value="InterPro"/>
</dbReference>
<dbReference type="GO" id="GO:0005737">
    <property type="term" value="C:cytoplasm"/>
    <property type="evidence" value="ECO:0007669"/>
    <property type="project" value="UniProtKB-SubCell"/>
</dbReference>
<dbReference type="GO" id="GO:0004553">
    <property type="term" value="F:hydrolase activity, hydrolyzing O-glycosyl compounds"/>
    <property type="evidence" value="ECO:0007669"/>
    <property type="project" value="InterPro"/>
</dbReference>
<dbReference type="GO" id="GO:0016762">
    <property type="term" value="F:xyloglucan:xyloglucosyl transferase activity"/>
    <property type="evidence" value="ECO:0000314"/>
    <property type="project" value="UniProtKB"/>
</dbReference>
<dbReference type="GO" id="GO:0070726">
    <property type="term" value="P:cell wall assembly"/>
    <property type="evidence" value="ECO:0000270"/>
    <property type="project" value="UniProtKB"/>
</dbReference>
<dbReference type="GO" id="GO:0009835">
    <property type="term" value="P:fruit ripening"/>
    <property type="evidence" value="ECO:0007669"/>
    <property type="project" value="UniProtKB-KW"/>
</dbReference>
<dbReference type="GO" id="GO:0010411">
    <property type="term" value="P:xyloglucan metabolic process"/>
    <property type="evidence" value="ECO:0007669"/>
    <property type="project" value="InterPro"/>
</dbReference>
<dbReference type="CDD" id="cd02176">
    <property type="entry name" value="GH16_XET"/>
    <property type="match status" value="1"/>
</dbReference>
<dbReference type="FunFam" id="2.60.120.200:FF:000025">
    <property type="entry name" value="Xyloglucan endotransglucosylase/hydrolase"/>
    <property type="match status" value="1"/>
</dbReference>
<dbReference type="Gene3D" id="2.60.120.200">
    <property type="match status" value="1"/>
</dbReference>
<dbReference type="InterPro" id="IPR044791">
    <property type="entry name" value="Beta-glucanase/XTH"/>
</dbReference>
<dbReference type="InterPro" id="IPR008264">
    <property type="entry name" value="Beta_glucanase"/>
</dbReference>
<dbReference type="InterPro" id="IPR013320">
    <property type="entry name" value="ConA-like_dom_sf"/>
</dbReference>
<dbReference type="InterPro" id="IPR000757">
    <property type="entry name" value="GH16"/>
</dbReference>
<dbReference type="InterPro" id="IPR008263">
    <property type="entry name" value="GH16_AS"/>
</dbReference>
<dbReference type="InterPro" id="IPR010713">
    <property type="entry name" value="XET_C"/>
</dbReference>
<dbReference type="InterPro" id="IPR016455">
    <property type="entry name" value="XTH"/>
</dbReference>
<dbReference type="PANTHER" id="PTHR31062">
    <property type="entry name" value="XYLOGLUCAN ENDOTRANSGLUCOSYLASE/HYDROLASE PROTEIN 8-RELATED"/>
    <property type="match status" value="1"/>
</dbReference>
<dbReference type="Pfam" id="PF00722">
    <property type="entry name" value="Glyco_hydro_16"/>
    <property type="match status" value="1"/>
</dbReference>
<dbReference type="Pfam" id="PF06955">
    <property type="entry name" value="XET_C"/>
    <property type="match status" value="1"/>
</dbReference>
<dbReference type="PIRSF" id="PIRSF005604">
    <property type="entry name" value="XET"/>
    <property type="match status" value="1"/>
</dbReference>
<dbReference type="PRINTS" id="PR00737">
    <property type="entry name" value="GLHYDRLASE16"/>
</dbReference>
<dbReference type="SUPFAM" id="SSF49899">
    <property type="entry name" value="Concanavalin A-like lectins/glucanases"/>
    <property type="match status" value="1"/>
</dbReference>
<dbReference type="PROSITE" id="PS01034">
    <property type="entry name" value="GH16_1"/>
    <property type="match status" value="1"/>
</dbReference>
<dbReference type="PROSITE" id="PS51762">
    <property type="entry name" value="GH16_2"/>
    <property type="match status" value="1"/>
</dbReference>
<proteinExistence type="evidence at protein level"/>
<gene>
    <name evidence="9 11" type="primary">XTH7</name>
</gene>
<organism evidence="11">
    <name type="scientific">Diospyros kaki</name>
    <name type="common">Kaki persimmon</name>
    <name type="synonym">Diospyros chinensis</name>
    <dbReference type="NCBI Taxonomy" id="35925"/>
    <lineage>
        <taxon>Eukaryota</taxon>
        <taxon>Viridiplantae</taxon>
        <taxon>Streptophyta</taxon>
        <taxon>Embryophyta</taxon>
        <taxon>Tracheophyta</taxon>
        <taxon>Spermatophyta</taxon>
        <taxon>Magnoliopsida</taxon>
        <taxon>eudicotyledons</taxon>
        <taxon>Gunneridae</taxon>
        <taxon>Pentapetalae</taxon>
        <taxon>asterids</taxon>
        <taxon>Ericales</taxon>
        <taxon>Ebenaceae</taxon>
        <taxon>Diospyros</taxon>
    </lineage>
</organism>
<protein>
    <recommendedName>
        <fullName evidence="10">Xyloglucan endotransglucosylase protein 7</fullName>
        <shortName evidence="10">XET protein 7</shortName>
        <ecNumber evidence="7 8">2.4.1.207</ecNumber>
    </recommendedName>
    <alternativeName>
        <fullName evidence="9">DkXTH7</fullName>
    </alternativeName>
    <alternativeName>
        <fullName evidence="10">Xyloglucan endotransglucosylase/hydrolase protein 7</fullName>
        <shortName evidence="10">XTH protein 7</shortName>
    </alternativeName>
</protein>
<sequence>MNAEGGNLHREFEITWGDGRARIHNNGGLLTLSLDRASGSGFRSKNEYLFGRIEIQIKLVAGNSAGTVATYYLSSEGPTHDEIDFEFLGNSSGEPYTLHTNVFSQGKGNREQQFFLWFDPTMDFHTYTILWNPQRIIFYVDETPIREFKNLERHGIPFPRSQAMRVYSSMWNADDWATRGGLVKTDWTKAPFTASYRSYKADACVWSGEASSCGSQDSNPSDKWWMTEELNATRMKRLRWVQKKYMVYNYCVDKMRFPEGLAPECNIS</sequence>
<keyword id="KW-0961">Cell wall biogenesis/degradation</keyword>
<keyword id="KW-0963">Cytoplasm</keyword>
<keyword id="KW-1015">Disulfide bond</keyword>
<keyword id="KW-0292">Fruit ripening</keyword>
<keyword id="KW-0325">Glycoprotein</keyword>
<keyword id="KW-0326">Glycosidase</keyword>
<keyword id="KW-0328">Glycosyltransferase</keyword>
<keyword id="KW-0378">Hydrolase</keyword>
<keyword id="KW-0808">Transferase</keyword>
<feature type="chain" id="PRO_0000454652" description="Xyloglucan endotransglucosylase protein 7">
    <location>
        <begin position="1"/>
        <end position="268"/>
    </location>
</feature>
<feature type="domain" description="GH16" evidence="5">
    <location>
        <begin position="1"/>
        <end position="196"/>
    </location>
</feature>
<feature type="active site" description="Nucleophile" evidence="2 6">
    <location>
        <position position="82"/>
    </location>
</feature>
<feature type="active site" description="Proton donor" evidence="2 6">
    <location>
        <position position="86"/>
    </location>
</feature>
<feature type="binding site" evidence="1">
    <location>
        <position position="86"/>
    </location>
    <ligand>
        <name>xyloglucan</name>
        <dbReference type="ChEBI" id="CHEBI:18233"/>
    </ligand>
</feature>
<feature type="binding site" evidence="1">
    <location>
        <begin position="99"/>
        <end position="101"/>
    </location>
    <ligand>
        <name>xyloglucan</name>
        <dbReference type="ChEBI" id="CHEBI:18233"/>
    </ligand>
</feature>
<feature type="binding site" evidence="1">
    <location>
        <begin position="109"/>
        <end position="111"/>
    </location>
    <ligand>
        <name>xyloglucan</name>
        <dbReference type="ChEBI" id="CHEBI:18233"/>
    </ligand>
</feature>
<feature type="binding site" evidence="1">
    <location>
        <begin position="175"/>
        <end position="176"/>
    </location>
    <ligand>
        <name>xyloglucan</name>
        <dbReference type="ChEBI" id="CHEBI:18233"/>
    </ligand>
</feature>
<feature type="binding site" evidence="1">
    <location>
        <position position="180"/>
    </location>
    <ligand>
        <name>xyloglucan</name>
        <dbReference type="ChEBI" id="CHEBI:18233"/>
    </ligand>
</feature>
<feature type="binding site" evidence="1">
    <location>
        <position position="256"/>
    </location>
    <ligand>
        <name>xyloglucan</name>
        <dbReference type="ChEBI" id="CHEBI:18233"/>
    </ligand>
</feature>
<feature type="site" description="Important for catalytic activity" evidence="1">
    <location>
        <position position="84"/>
    </location>
</feature>
<feature type="glycosylation site" description="N-linked (GlcNAc...) asparagine" evidence="3 4">
    <location>
        <position position="90"/>
    </location>
</feature>
<feature type="disulfide bond" evidence="1">
    <location>
        <begin position="204"/>
        <end position="213"/>
    </location>
</feature>
<feature type="disulfide bond" evidence="1">
    <location>
        <begin position="251"/>
        <end position="265"/>
    </location>
</feature>
<evidence type="ECO:0000250" key="1">
    <source>
        <dbReference type="UniProtKB" id="Q8GZD5"/>
    </source>
</evidence>
<evidence type="ECO:0000255" key="2">
    <source>
        <dbReference type="PIRSR" id="PIRSR005604-1"/>
    </source>
</evidence>
<evidence type="ECO:0000255" key="3">
    <source>
        <dbReference type="PIRSR" id="PIRSR005604-2"/>
    </source>
</evidence>
<evidence type="ECO:0000255" key="4">
    <source>
        <dbReference type="PROSITE-ProRule" id="PRU00498"/>
    </source>
</evidence>
<evidence type="ECO:0000255" key="5">
    <source>
        <dbReference type="PROSITE-ProRule" id="PRU01098"/>
    </source>
</evidence>
<evidence type="ECO:0000255" key="6">
    <source>
        <dbReference type="PROSITE-ProRule" id="PRU10064"/>
    </source>
</evidence>
<evidence type="ECO:0000255" key="7">
    <source>
        <dbReference type="RuleBase" id="RU361120"/>
    </source>
</evidence>
<evidence type="ECO:0000269" key="8">
    <source>
    </source>
</evidence>
<evidence type="ECO:0000303" key="9">
    <source>
    </source>
</evidence>
<evidence type="ECO:0000305" key="10"/>
<evidence type="ECO:0000312" key="11">
    <source>
        <dbReference type="EMBL" id="AGT29357.1"/>
    </source>
</evidence>
<reference evidence="11" key="1">
    <citation type="journal article" date="2016" name="Front. Plant Sci.">
        <title>Isolation and Characterization of Two Persimmon Xyloglucan Endotransglycosylase/Hydrolase (XTH) Genes That Have Divergent Functions in Cell Wall Modification and Fruit Postharvest Softening.</title>
        <authorList>
            <person name="Han Y."/>
            <person name="Ban Q."/>
            <person name="Hou Y."/>
            <person name="Meng K."/>
            <person name="Suo J."/>
            <person name="Rao J."/>
        </authorList>
    </citation>
    <scope>NUCLEOTIDE SEQUENCE [MRNA]</scope>
    <scope>FUNCTION</scope>
    <scope>CATALYTIC ACTIVITY</scope>
    <scope>BIOPHYSICOCHEMICAL PROPERTIES</scope>
    <scope>SUBCELLULAR LOCATION</scope>
    <scope>TISSUE SPECIFICITY</scope>
    <scope>DEVELOPMENTAL STAGE</scope>
    <scope>INDUCTION</scope>
    <scope>PHYLOGENETIC ANALYSIS</scope>
    <source>
        <strain evidence="9">cv. Fuping Jianshi</strain>
        <tissue evidence="9">Fruit</tissue>
    </source>
</reference>
<name>XTH7_DIOKA</name>
<accession>A0A067XR63</accession>